<dbReference type="EC" id="1.13.11.5" evidence="1"/>
<dbReference type="EMBL" id="CP001025">
    <property type="protein sequence ID" value="ACB63214.1"/>
    <property type="molecule type" value="Genomic_DNA"/>
</dbReference>
<dbReference type="RefSeq" id="WP_012363191.1">
    <property type="nucleotide sequence ID" value="NC_010551.1"/>
</dbReference>
<dbReference type="SMR" id="B1YTZ1"/>
<dbReference type="KEGG" id="bac:BamMC406_0718"/>
<dbReference type="HOGENOM" id="CLU_027174_0_0_4"/>
<dbReference type="OrthoDB" id="9811253at2"/>
<dbReference type="UniPathway" id="UPA00139">
    <property type="reaction ID" value="UER00339"/>
</dbReference>
<dbReference type="Proteomes" id="UP000001680">
    <property type="component" value="Chromosome 1"/>
</dbReference>
<dbReference type="GO" id="GO:0005737">
    <property type="term" value="C:cytoplasm"/>
    <property type="evidence" value="ECO:0007669"/>
    <property type="project" value="TreeGrafter"/>
</dbReference>
<dbReference type="GO" id="GO:0004411">
    <property type="term" value="F:homogentisate 1,2-dioxygenase activity"/>
    <property type="evidence" value="ECO:0007669"/>
    <property type="project" value="UniProtKB-UniRule"/>
</dbReference>
<dbReference type="GO" id="GO:0005506">
    <property type="term" value="F:iron ion binding"/>
    <property type="evidence" value="ECO:0007669"/>
    <property type="project" value="UniProtKB-UniRule"/>
</dbReference>
<dbReference type="GO" id="GO:0006559">
    <property type="term" value="P:L-phenylalanine catabolic process"/>
    <property type="evidence" value="ECO:0007669"/>
    <property type="project" value="UniProtKB-UniRule"/>
</dbReference>
<dbReference type="GO" id="GO:0006572">
    <property type="term" value="P:tyrosine catabolic process"/>
    <property type="evidence" value="ECO:0007669"/>
    <property type="project" value="UniProtKB-UniRule"/>
</dbReference>
<dbReference type="CDD" id="cd07000">
    <property type="entry name" value="cupin_HGO_N"/>
    <property type="match status" value="1"/>
</dbReference>
<dbReference type="FunFam" id="2.60.120.10:FF:000034">
    <property type="entry name" value="Homogentisate 1,2-dioxygenase"/>
    <property type="match status" value="1"/>
</dbReference>
<dbReference type="Gene3D" id="2.60.120.10">
    <property type="entry name" value="Jelly Rolls"/>
    <property type="match status" value="1"/>
</dbReference>
<dbReference type="HAMAP" id="MF_00334">
    <property type="entry name" value="Homogentis_dioxygen"/>
    <property type="match status" value="1"/>
</dbReference>
<dbReference type="InterPro" id="IPR046451">
    <property type="entry name" value="HgmA_C"/>
</dbReference>
<dbReference type="InterPro" id="IPR046452">
    <property type="entry name" value="HgmA_N"/>
</dbReference>
<dbReference type="InterPro" id="IPR005708">
    <property type="entry name" value="Homogentis_dOase"/>
</dbReference>
<dbReference type="InterPro" id="IPR022950">
    <property type="entry name" value="Homogentis_dOase_bac"/>
</dbReference>
<dbReference type="InterPro" id="IPR014710">
    <property type="entry name" value="RmlC-like_jellyroll"/>
</dbReference>
<dbReference type="InterPro" id="IPR011051">
    <property type="entry name" value="RmlC_Cupin_sf"/>
</dbReference>
<dbReference type="NCBIfam" id="TIGR01015">
    <property type="entry name" value="hmgA"/>
    <property type="match status" value="1"/>
</dbReference>
<dbReference type="PANTHER" id="PTHR11056">
    <property type="entry name" value="HOMOGENTISATE 1,2-DIOXYGENASE"/>
    <property type="match status" value="1"/>
</dbReference>
<dbReference type="PANTHER" id="PTHR11056:SF0">
    <property type="entry name" value="HOMOGENTISATE 1,2-DIOXYGENASE"/>
    <property type="match status" value="1"/>
</dbReference>
<dbReference type="Pfam" id="PF04209">
    <property type="entry name" value="HgmA_C"/>
    <property type="match status" value="1"/>
</dbReference>
<dbReference type="Pfam" id="PF20510">
    <property type="entry name" value="HgmA_N"/>
    <property type="match status" value="1"/>
</dbReference>
<dbReference type="SUPFAM" id="SSF51182">
    <property type="entry name" value="RmlC-like cupins"/>
    <property type="match status" value="1"/>
</dbReference>
<comment type="function">
    <text evidence="1">Involved in the catabolism of homogentisate (2,5-dihydroxyphenylacetate or 2,5-OH-PhAc), a central intermediate in the degradation of phenylalanine and tyrosine. Catalyzes the oxidative ring cleavage of the aromatic ring of homogentisate to yield maleylacetoacetate.</text>
</comment>
<comment type="catalytic activity">
    <reaction evidence="1">
        <text>homogentisate + O2 = 4-maleylacetoacetate + H(+)</text>
        <dbReference type="Rhea" id="RHEA:15449"/>
        <dbReference type="ChEBI" id="CHEBI:15378"/>
        <dbReference type="ChEBI" id="CHEBI:15379"/>
        <dbReference type="ChEBI" id="CHEBI:16169"/>
        <dbReference type="ChEBI" id="CHEBI:17105"/>
        <dbReference type="EC" id="1.13.11.5"/>
    </reaction>
</comment>
<comment type="cofactor">
    <cofactor evidence="1">
        <name>Fe cation</name>
        <dbReference type="ChEBI" id="CHEBI:24875"/>
    </cofactor>
</comment>
<comment type="pathway">
    <text evidence="1">Amino-acid degradation; L-phenylalanine degradation; acetoacetate and fumarate from L-phenylalanine: step 4/6.</text>
</comment>
<comment type="subunit">
    <text evidence="1">Hexamer; dimer of trimers.</text>
</comment>
<comment type="similarity">
    <text evidence="1">Belongs to the homogentisate dioxygenase family.</text>
</comment>
<organism>
    <name type="scientific">Burkholderia ambifaria (strain MC40-6)</name>
    <dbReference type="NCBI Taxonomy" id="398577"/>
    <lineage>
        <taxon>Bacteria</taxon>
        <taxon>Pseudomonadati</taxon>
        <taxon>Pseudomonadota</taxon>
        <taxon>Betaproteobacteria</taxon>
        <taxon>Burkholderiales</taxon>
        <taxon>Burkholderiaceae</taxon>
        <taxon>Burkholderia</taxon>
        <taxon>Burkholderia cepacia complex</taxon>
    </lineage>
</organism>
<proteinExistence type="inferred from homology"/>
<keyword id="KW-0223">Dioxygenase</keyword>
<keyword id="KW-0408">Iron</keyword>
<keyword id="KW-0479">Metal-binding</keyword>
<keyword id="KW-0560">Oxidoreductase</keyword>
<keyword id="KW-0585">Phenylalanine catabolism</keyword>
<keyword id="KW-0828">Tyrosine catabolism</keyword>
<feature type="chain" id="PRO_1000119840" description="Homogentisate 1,2-dioxygenase">
    <location>
        <begin position="1"/>
        <end position="444"/>
    </location>
</feature>
<feature type="active site" description="Proton acceptor" evidence="1">
    <location>
        <position position="298"/>
    </location>
</feature>
<feature type="binding site" evidence="1">
    <location>
        <position position="341"/>
    </location>
    <ligand>
        <name>Fe cation</name>
        <dbReference type="ChEBI" id="CHEBI:24875"/>
    </ligand>
</feature>
<feature type="binding site" evidence="1">
    <location>
        <position position="347"/>
    </location>
    <ligand>
        <name>Fe cation</name>
        <dbReference type="ChEBI" id="CHEBI:24875"/>
    </ligand>
</feature>
<feature type="binding site" evidence="1">
    <location>
        <position position="356"/>
    </location>
    <ligand>
        <name>homogentisate</name>
        <dbReference type="ChEBI" id="CHEBI:16169"/>
    </ligand>
</feature>
<feature type="binding site" evidence="1">
    <location>
        <position position="377"/>
    </location>
    <ligand>
        <name>Fe cation</name>
        <dbReference type="ChEBI" id="CHEBI:24875"/>
    </ligand>
</feature>
<feature type="binding site" evidence="1">
    <location>
        <position position="377"/>
    </location>
    <ligand>
        <name>homogentisate</name>
        <dbReference type="ChEBI" id="CHEBI:16169"/>
    </ligand>
</feature>
<reference key="1">
    <citation type="submission" date="2008-04" db="EMBL/GenBank/DDBJ databases">
        <title>Complete sequence of chromosome 1 of Burkholderia ambifaria MC40-6.</title>
        <authorList>
            <person name="Copeland A."/>
            <person name="Lucas S."/>
            <person name="Lapidus A."/>
            <person name="Glavina del Rio T."/>
            <person name="Dalin E."/>
            <person name="Tice H."/>
            <person name="Pitluck S."/>
            <person name="Chain P."/>
            <person name="Malfatti S."/>
            <person name="Shin M."/>
            <person name="Vergez L."/>
            <person name="Lang D."/>
            <person name="Schmutz J."/>
            <person name="Larimer F."/>
            <person name="Land M."/>
            <person name="Hauser L."/>
            <person name="Kyrpides N."/>
            <person name="Lykidis A."/>
            <person name="Ramette A."/>
            <person name="Konstantinidis K."/>
            <person name="Tiedje J."/>
            <person name="Richardson P."/>
        </authorList>
    </citation>
    <scope>NUCLEOTIDE SEQUENCE [LARGE SCALE GENOMIC DNA]</scope>
    <source>
        <strain>MC40-6</strain>
    </source>
</reference>
<evidence type="ECO:0000255" key="1">
    <source>
        <dbReference type="HAMAP-Rule" id="MF_00334"/>
    </source>
</evidence>
<protein>
    <recommendedName>
        <fullName evidence="1">Homogentisate 1,2-dioxygenase</fullName>
        <shortName evidence="1">HGDO</shortName>
        <ecNumber evidence="1">1.13.11.5</ecNumber>
    </recommendedName>
    <alternativeName>
        <fullName evidence="1">Homogentisate oxygenase</fullName>
    </alternativeName>
    <alternativeName>
        <fullName evidence="1">Homogentisic acid oxidase</fullName>
    </alternativeName>
    <alternativeName>
        <fullName evidence="1">Homogentisicase</fullName>
    </alternativeName>
</protein>
<accession>B1YTZ1</accession>
<gene>
    <name evidence="1" type="primary">hmgA</name>
    <name type="ordered locus">BamMC406_0718</name>
</gene>
<sequence length="444" mass="48962">MTLDLSTPATAGYLSGFANEFATEALPGALPHGRNSPQRAPYGLYAEQLSGTAFTAPRGHNRRSWLYRIRPAAVHRPFEPVTGPQRLVSEFGDSADVPPTPPNQLRWDPLPMPVEPTDFVEGLVTMAGNGSAAAMNGCAIHLYAANRSMQDRFFYSADGELLIVPQQGRLFIATEFGRLDVEPFEIAVIPRGVRFSVALPDGDARGYICENFGALLRLPDLGPIGSNGLANPRDFLTPQAAYEDREGAFELVAKLNGRLWRADIGHSPFDVVAWHGNYAPYKYDLRLFNTIGSISFDHPDPSIFLVLQSQSDTPGVDAIDFVIFPPRWLAAEDTFRPPWFHRNVASEFMGLVHGAYDAKAEGFVPGGASLHNCMSGHGPDADTFEKASASDTTKPHKVDATMAFMFETRTLIRPTRYALDTAQLQADYFECWQGIRKHFNPEQQ</sequence>
<name>HGD_BURA4</name>